<protein>
    <recommendedName>
        <fullName evidence="1">Chorismate synthase</fullName>
        <shortName evidence="1">CS</shortName>
        <ecNumber evidence="1">4.2.3.5</ecNumber>
    </recommendedName>
    <alternativeName>
        <fullName evidence="1">5-enolpyruvylshikimate-3-phosphate phospholyase</fullName>
    </alternativeName>
</protein>
<proteinExistence type="inferred from homology"/>
<organism>
    <name type="scientific">Streptococcus pyogenes serotype M12 (strain MGAS2096)</name>
    <dbReference type="NCBI Taxonomy" id="370553"/>
    <lineage>
        <taxon>Bacteria</taxon>
        <taxon>Bacillati</taxon>
        <taxon>Bacillota</taxon>
        <taxon>Bacilli</taxon>
        <taxon>Lactobacillales</taxon>
        <taxon>Streptococcaceae</taxon>
        <taxon>Streptococcus</taxon>
    </lineage>
</organism>
<evidence type="ECO:0000255" key="1">
    <source>
        <dbReference type="HAMAP-Rule" id="MF_00300"/>
    </source>
</evidence>
<feature type="chain" id="PRO_0000256345" description="Chorismate synthase">
    <location>
        <begin position="1"/>
        <end position="388"/>
    </location>
</feature>
<feature type="binding site" evidence="1">
    <location>
        <position position="39"/>
    </location>
    <ligand>
        <name>NADP(+)</name>
        <dbReference type="ChEBI" id="CHEBI:58349"/>
    </ligand>
</feature>
<feature type="binding site" evidence="1">
    <location>
        <position position="45"/>
    </location>
    <ligand>
        <name>NADP(+)</name>
        <dbReference type="ChEBI" id="CHEBI:58349"/>
    </ligand>
</feature>
<feature type="binding site" evidence="1">
    <location>
        <begin position="130"/>
        <end position="132"/>
    </location>
    <ligand>
        <name>FMN</name>
        <dbReference type="ChEBI" id="CHEBI:58210"/>
    </ligand>
</feature>
<feature type="binding site" evidence="1">
    <location>
        <begin position="251"/>
        <end position="252"/>
    </location>
    <ligand>
        <name>FMN</name>
        <dbReference type="ChEBI" id="CHEBI:58210"/>
    </ligand>
</feature>
<feature type="binding site" evidence="1">
    <location>
        <position position="296"/>
    </location>
    <ligand>
        <name>FMN</name>
        <dbReference type="ChEBI" id="CHEBI:58210"/>
    </ligand>
</feature>
<feature type="binding site" evidence="1">
    <location>
        <begin position="311"/>
        <end position="315"/>
    </location>
    <ligand>
        <name>FMN</name>
        <dbReference type="ChEBI" id="CHEBI:58210"/>
    </ligand>
</feature>
<feature type="binding site" evidence="1">
    <location>
        <position position="337"/>
    </location>
    <ligand>
        <name>FMN</name>
        <dbReference type="ChEBI" id="CHEBI:58210"/>
    </ligand>
</feature>
<dbReference type="EC" id="4.2.3.5" evidence="1"/>
<dbReference type="EMBL" id="CP000261">
    <property type="protein sequence ID" value="ABF35742.1"/>
    <property type="molecule type" value="Genomic_DNA"/>
</dbReference>
<dbReference type="SMR" id="Q1JCG6"/>
<dbReference type="KEGG" id="spj:MGAS2096_Spy0690"/>
<dbReference type="HOGENOM" id="CLU_034547_2_0_9"/>
<dbReference type="UniPathway" id="UPA00053">
    <property type="reaction ID" value="UER00090"/>
</dbReference>
<dbReference type="GO" id="GO:0005829">
    <property type="term" value="C:cytosol"/>
    <property type="evidence" value="ECO:0007669"/>
    <property type="project" value="TreeGrafter"/>
</dbReference>
<dbReference type="GO" id="GO:0004107">
    <property type="term" value="F:chorismate synthase activity"/>
    <property type="evidence" value="ECO:0007669"/>
    <property type="project" value="UniProtKB-UniRule"/>
</dbReference>
<dbReference type="GO" id="GO:0010181">
    <property type="term" value="F:FMN binding"/>
    <property type="evidence" value="ECO:0007669"/>
    <property type="project" value="TreeGrafter"/>
</dbReference>
<dbReference type="GO" id="GO:0008652">
    <property type="term" value="P:amino acid biosynthetic process"/>
    <property type="evidence" value="ECO:0007669"/>
    <property type="project" value="UniProtKB-KW"/>
</dbReference>
<dbReference type="GO" id="GO:0009073">
    <property type="term" value="P:aromatic amino acid family biosynthetic process"/>
    <property type="evidence" value="ECO:0007669"/>
    <property type="project" value="UniProtKB-KW"/>
</dbReference>
<dbReference type="GO" id="GO:0009423">
    <property type="term" value="P:chorismate biosynthetic process"/>
    <property type="evidence" value="ECO:0007669"/>
    <property type="project" value="UniProtKB-UniRule"/>
</dbReference>
<dbReference type="CDD" id="cd07304">
    <property type="entry name" value="Chorismate_synthase"/>
    <property type="match status" value="1"/>
</dbReference>
<dbReference type="FunFam" id="3.60.150.10:FF:000002">
    <property type="entry name" value="Chorismate synthase"/>
    <property type="match status" value="1"/>
</dbReference>
<dbReference type="Gene3D" id="3.60.150.10">
    <property type="entry name" value="Chorismate synthase AroC"/>
    <property type="match status" value="1"/>
</dbReference>
<dbReference type="HAMAP" id="MF_00300">
    <property type="entry name" value="Chorismate_synth"/>
    <property type="match status" value="1"/>
</dbReference>
<dbReference type="InterPro" id="IPR000453">
    <property type="entry name" value="Chorismate_synth"/>
</dbReference>
<dbReference type="InterPro" id="IPR035904">
    <property type="entry name" value="Chorismate_synth_AroC_sf"/>
</dbReference>
<dbReference type="InterPro" id="IPR020541">
    <property type="entry name" value="Chorismate_synthase_CS"/>
</dbReference>
<dbReference type="NCBIfam" id="TIGR00033">
    <property type="entry name" value="aroC"/>
    <property type="match status" value="1"/>
</dbReference>
<dbReference type="NCBIfam" id="NF003793">
    <property type="entry name" value="PRK05382.1"/>
    <property type="match status" value="1"/>
</dbReference>
<dbReference type="PANTHER" id="PTHR21085">
    <property type="entry name" value="CHORISMATE SYNTHASE"/>
    <property type="match status" value="1"/>
</dbReference>
<dbReference type="PANTHER" id="PTHR21085:SF0">
    <property type="entry name" value="CHORISMATE SYNTHASE"/>
    <property type="match status" value="1"/>
</dbReference>
<dbReference type="Pfam" id="PF01264">
    <property type="entry name" value="Chorismate_synt"/>
    <property type="match status" value="1"/>
</dbReference>
<dbReference type="PIRSF" id="PIRSF001456">
    <property type="entry name" value="Chorismate_synth"/>
    <property type="match status" value="1"/>
</dbReference>
<dbReference type="SUPFAM" id="SSF103263">
    <property type="entry name" value="Chorismate synthase, AroC"/>
    <property type="match status" value="1"/>
</dbReference>
<dbReference type="PROSITE" id="PS00787">
    <property type="entry name" value="CHORISMATE_SYNTHASE_1"/>
    <property type="match status" value="1"/>
</dbReference>
<dbReference type="PROSITE" id="PS00788">
    <property type="entry name" value="CHORISMATE_SYNTHASE_2"/>
    <property type="match status" value="1"/>
</dbReference>
<dbReference type="PROSITE" id="PS00789">
    <property type="entry name" value="CHORISMATE_SYNTHASE_3"/>
    <property type="match status" value="1"/>
</dbReference>
<comment type="function">
    <text evidence="1">Catalyzes the anti-1,4-elimination of the C-3 phosphate and the C-6 proR hydrogen from 5-enolpyruvylshikimate-3-phosphate (EPSP) to yield chorismate, which is the branch point compound that serves as the starting substrate for the three terminal pathways of aromatic amino acid biosynthesis. This reaction introduces a second double bond into the aromatic ring system.</text>
</comment>
<comment type="catalytic activity">
    <reaction evidence="1">
        <text>5-O-(1-carboxyvinyl)-3-phosphoshikimate = chorismate + phosphate</text>
        <dbReference type="Rhea" id="RHEA:21020"/>
        <dbReference type="ChEBI" id="CHEBI:29748"/>
        <dbReference type="ChEBI" id="CHEBI:43474"/>
        <dbReference type="ChEBI" id="CHEBI:57701"/>
        <dbReference type="EC" id="4.2.3.5"/>
    </reaction>
</comment>
<comment type="cofactor">
    <cofactor evidence="1">
        <name>FMNH2</name>
        <dbReference type="ChEBI" id="CHEBI:57618"/>
    </cofactor>
    <text evidence="1">Reduced FMN (FMNH(2)).</text>
</comment>
<comment type="pathway">
    <text evidence="1">Metabolic intermediate biosynthesis; chorismate biosynthesis; chorismate from D-erythrose 4-phosphate and phosphoenolpyruvate: step 7/7.</text>
</comment>
<comment type="subunit">
    <text evidence="1">Homotetramer.</text>
</comment>
<comment type="similarity">
    <text evidence="1">Belongs to the chorismate synthase family.</text>
</comment>
<reference key="1">
    <citation type="journal article" date="2006" name="Proc. Natl. Acad. Sci. U.S.A.">
        <title>Molecular genetic anatomy of inter- and intraserotype variation in the human bacterial pathogen group A Streptococcus.</title>
        <authorList>
            <person name="Beres S.B."/>
            <person name="Richter E.W."/>
            <person name="Nagiec M.J."/>
            <person name="Sumby P."/>
            <person name="Porcella S.F."/>
            <person name="DeLeo F.R."/>
            <person name="Musser J.M."/>
        </authorList>
    </citation>
    <scope>NUCLEOTIDE SEQUENCE [LARGE SCALE GENOMIC DNA]</scope>
    <source>
        <strain>MGAS2096</strain>
    </source>
</reference>
<accession>Q1JCG6</accession>
<gene>
    <name evidence="1" type="primary">aroC</name>
    <name type="ordered locus">MGAS2096_Spy0690</name>
</gene>
<keyword id="KW-0028">Amino-acid biosynthesis</keyword>
<keyword id="KW-0057">Aromatic amino acid biosynthesis</keyword>
<keyword id="KW-0274">FAD</keyword>
<keyword id="KW-0285">Flavoprotein</keyword>
<keyword id="KW-0288">FMN</keyword>
<keyword id="KW-0456">Lyase</keyword>
<keyword id="KW-0521">NADP</keyword>
<sequence length="388" mass="42566">MRYLTAGESHGPSLTAIIEGIPAGLTLHPADIDHELQRRQGGYGRGARMSIETDRVQISSGVRHGKTTGAPITLTVINKDHQKWLDVMAVGDIEETLKLKRRVKHPRPGHADLVGGIKYHFNDLRDALERSSARETTMRVAVGAVAKRILAELGIDMLHHILIFGGITITIPSKLSFRELQERALHSELSIVNPKQEEEIKTYIDKIKKEGDTIGGIIETIVQGVPAGLGSYVQWDKKLDAKLAQAVLSINAFKGVEFGVGFDMGFQKGSQVMDEITWTPTQGYGRQTNHLGGFEGGMTTGQPLVVKGVMKPIPTLYKPLMSVDIDSHEPYKATVERSDPTALPAAGVIMENVVATVLAKEILETFSSTTMSELQKAFSDYRAYVKQF</sequence>
<name>AROC_STRPB</name>